<gene>
    <name type="primary">ins-22</name>
    <name type="ORF">M04D8.2</name>
</gene>
<reference key="1">
    <citation type="journal article" date="1998" name="Science">
        <title>Genome sequence of the nematode C. elegans: a platform for investigating biology.</title>
        <authorList>
            <consortium name="The C. elegans sequencing consortium"/>
        </authorList>
    </citation>
    <scope>NUCLEOTIDE SEQUENCE [LARGE SCALE GENOMIC DNA]</scope>
    <source>
        <strain>Bristol N2</strain>
    </source>
</reference>
<reference key="2">
    <citation type="journal article" date="1998" name="Genome Res.">
        <title>New insulin-like proteins with atypical disulfide bond pattern characterized in Caenorhabditis elegans by comparative sequence analysis and homology modeling.</title>
        <authorList>
            <person name="Duret L."/>
            <person name="Guex N."/>
            <person name="Peitsch M.C."/>
            <person name="Bairoch A."/>
        </authorList>
    </citation>
    <scope>SIMILARITY TO INSULIN</scope>
    <scope>3D-STRUCTURE MODELING</scope>
</reference>
<dbReference type="EMBL" id="Z32682">
    <property type="protein sequence ID" value="CAA83611.1"/>
    <property type="molecule type" value="Genomic_DNA"/>
</dbReference>
<dbReference type="PIR" id="S43589">
    <property type="entry name" value="S43589"/>
</dbReference>
<dbReference type="RefSeq" id="NP_499223.1">
    <property type="nucleotide sequence ID" value="NM_066822.5"/>
</dbReference>
<dbReference type="SMR" id="Q21508"/>
<dbReference type="BioGRID" id="56189">
    <property type="interactions" value="2"/>
</dbReference>
<dbReference type="FunCoup" id="Q21508">
    <property type="interactions" value="171"/>
</dbReference>
<dbReference type="STRING" id="6239.M04D8.2.1"/>
<dbReference type="PaxDb" id="6239-M04D8.2"/>
<dbReference type="EnsemblMetazoa" id="M04D8.2.1">
    <property type="protein sequence ID" value="M04D8.2.1"/>
    <property type="gene ID" value="WBGene00002105"/>
</dbReference>
<dbReference type="GeneID" id="191690"/>
<dbReference type="KEGG" id="cel:CELE_M04D8.2"/>
<dbReference type="UCSC" id="M04D8.2.2">
    <property type="organism name" value="c. elegans"/>
</dbReference>
<dbReference type="AGR" id="WB:WBGene00002105"/>
<dbReference type="CTD" id="191690"/>
<dbReference type="WormBase" id="M04D8.2">
    <property type="protein sequence ID" value="CE00577"/>
    <property type="gene ID" value="WBGene00002105"/>
    <property type="gene designation" value="ins-22"/>
</dbReference>
<dbReference type="eggNOG" id="ENOG502TISA">
    <property type="taxonomic scope" value="Eukaryota"/>
</dbReference>
<dbReference type="GeneTree" id="ENSGT00970000197132"/>
<dbReference type="HOGENOM" id="CLU_2673472_0_0_1"/>
<dbReference type="InParanoid" id="Q21508"/>
<dbReference type="OMA" id="EYCSMGF"/>
<dbReference type="OrthoDB" id="5837265at2759"/>
<dbReference type="PhylomeDB" id="Q21508"/>
<dbReference type="PRO" id="PR:Q21508"/>
<dbReference type="Proteomes" id="UP000001940">
    <property type="component" value="Chromosome III"/>
</dbReference>
<dbReference type="Bgee" id="WBGene00002105">
    <property type="expression patterns" value="Expressed in adult organism and 4 other cell types or tissues"/>
</dbReference>
<dbReference type="GO" id="GO:0005576">
    <property type="term" value="C:extracellular region"/>
    <property type="evidence" value="ECO:0007669"/>
    <property type="project" value="UniProtKB-SubCell"/>
</dbReference>
<proteinExistence type="inferred from homology"/>
<sequence length="83" mass="9341">MHTTTILICFFIFLVQVSTMDAHTDKYVRTLCGKTAIRNIANLCPPKPEMKGICSTGEYPSITEYCSMGFSDSQIKFMCCDNQ</sequence>
<organism>
    <name type="scientific">Caenorhabditis elegans</name>
    <dbReference type="NCBI Taxonomy" id="6239"/>
    <lineage>
        <taxon>Eukaryota</taxon>
        <taxon>Metazoa</taxon>
        <taxon>Ecdysozoa</taxon>
        <taxon>Nematoda</taxon>
        <taxon>Chromadorea</taxon>
        <taxon>Rhabditida</taxon>
        <taxon>Rhabditina</taxon>
        <taxon>Rhabditomorpha</taxon>
        <taxon>Rhabditoidea</taxon>
        <taxon>Rhabditidae</taxon>
        <taxon>Peloderinae</taxon>
        <taxon>Caenorhabditis</taxon>
    </lineage>
</organism>
<protein>
    <recommendedName>
        <fullName>Probable insulin-like peptide alpha-type 2</fullName>
    </recommendedName>
</protein>
<accession>Q21508</accession>
<comment type="subcellular location">
    <subcellularLocation>
        <location evidence="2">Secreted</location>
    </subcellularLocation>
</comment>
<comment type="similarity">
    <text evidence="2">Belongs to the insulin family.</text>
</comment>
<name>ILA2_CAEEL</name>
<evidence type="ECO:0000255" key="1"/>
<evidence type="ECO:0000305" key="2"/>
<keyword id="KW-1015">Disulfide bond</keyword>
<keyword id="KW-1185">Reference proteome</keyword>
<keyword id="KW-0964">Secreted</keyword>
<keyword id="KW-0732">Signal</keyword>
<feature type="signal peptide" evidence="1">
    <location>
        <begin position="1"/>
        <end position="21"/>
    </location>
</feature>
<feature type="chain" id="PRO_0000016214" description="Probable insulin-like peptide alpha-type 2">
    <location>
        <begin position="22"/>
        <end position="83"/>
    </location>
</feature>
<feature type="disulfide bond" evidence="1">
    <location>
        <begin position="32"/>
        <end position="66"/>
    </location>
</feature>
<feature type="disulfide bond" evidence="1">
    <location>
        <begin position="44"/>
        <end position="79"/>
    </location>
</feature>
<feature type="disulfide bond" evidence="1">
    <location>
        <begin position="54"/>
        <end position="80"/>
    </location>
</feature>